<dbReference type="EMBL" id="AM295250">
    <property type="protein sequence ID" value="CAL27854.1"/>
    <property type="molecule type" value="Genomic_DNA"/>
</dbReference>
<dbReference type="RefSeq" id="WP_015900195.1">
    <property type="nucleotide sequence ID" value="NC_012121.1"/>
</dbReference>
<dbReference type="SMR" id="B9DPC0"/>
<dbReference type="GeneID" id="93793374"/>
<dbReference type="KEGG" id="sca:SCA_0946"/>
<dbReference type="eggNOG" id="COG0323">
    <property type="taxonomic scope" value="Bacteria"/>
</dbReference>
<dbReference type="HOGENOM" id="CLU_004131_4_1_9"/>
<dbReference type="OrthoDB" id="9763467at2"/>
<dbReference type="BioCyc" id="SCAR396513:SCA_RS04760-MONOMER"/>
<dbReference type="Proteomes" id="UP000000444">
    <property type="component" value="Chromosome"/>
</dbReference>
<dbReference type="GO" id="GO:0032300">
    <property type="term" value="C:mismatch repair complex"/>
    <property type="evidence" value="ECO:0007669"/>
    <property type="project" value="InterPro"/>
</dbReference>
<dbReference type="GO" id="GO:0005524">
    <property type="term" value="F:ATP binding"/>
    <property type="evidence" value="ECO:0007669"/>
    <property type="project" value="InterPro"/>
</dbReference>
<dbReference type="GO" id="GO:0016887">
    <property type="term" value="F:ATP hydrolysis activity"/>
    <property type="evidence" value="ECO:0007669"/>
    <property type="project" value="InterPro"/>
</dbReference>
<dbReference type="GO" id="GO:0140664">
    <property type="term" value="F:ATP-dependent DNA damage sensor activity"/>
    <property type="evidence" value="ECO:0007669"/>
    <property type="project" value="InterPro"/>
</dbReference>
<dbReference type="GO" id="GO:0030983">
    <property type="term" value="F:mismatched DNA binding"/>
    <property type="evidence" value="ECO:0007669"/>
    <property type="project" value="InterPro"/>
</dbReference>
<dbReference type="GO" id="GO:0006298">
    <property type="term" value="P:mismatch repair"/>
    <property type="evidence" value="ECO:0007669"/>
    <property type="project" value="UniProtKB-UniRule"/>
</dbReference>
<dbReference type="CDD" id="cd16926">
    <property type="entry name" value="HATPase_MutL-MLH-PMS-like"/>
    <property type="match status" value="1"/>
</dbReference>
<dbReference type="CDD" id="cd00782">
    <property type="entry name" value="MutL_Trans"/>
    <property type="match status" value="1"/>
</dbReference>
<dbReference type="FunFam" id="3.30.1370.100:FF:000004">
    <property type="entry name" value="DNA mismatch repair endonuclease MutL"/>
    <property type="match status" value="1"/>
</dbReference>
<dbReference type="FunFam" id="3.30.230.10:FF:000036">
    <property type="entry name" value="DNA mismatch repair endonuclease MutL"/>
    <property type="match status" value="1"/>
</dbReference>
<dbReference type="FunFam" id="3.30.565.10:FF:000003">
    <property type="entry name" value="DNA mismatch repair endonuclease MutL"/>
    <property type="match status" value="1"/>
</dbReference>
<dbReference type="Gene3D" id="3.30.230.10">
    <property type="match status" value="1"/>
</dbReference>
<dbReference type="Gene3D" id="3.30.565.10">
    <property type="entry name" value="Histidine kinase-like ATPase, C-terminal domain"/>
    <property type="match status" value="1"/>
</dbReference>
<dbReference type="Gene3D" id="3.30.1540.20">
    <property type="entry name" value="MutL, C-terminal domain, dimerisation subdomain"/>
    <property type="match status" value="1"/>
</dbReference>
<dbReference type="Gene3D" id="3.30.1370.100">
    <property type="entry name" value="MutL, C-terminal domain, regulatory subdomain"/>
    <property type="match status" value="1"/>
</dbReference>
<dbReference type="HAMAP" id="MF_00149">
    <property type="entry name" value="DNA_mis_repair"/>
    <property type="match status" value="1"/>
</dbReference>
<dbReference type="InterPro" id="IPR014762">
    <property type="entry name" value="DNA_mismatch_repair_CS"/>
</dbReference>
<dbReference type="InterPro" id="IPR020667">
    <property type="entry name" value="DNA_mismatch_repair_MutL"/>
</dbReference>
<dbReference type="InterPro" id="IPR013507">
    <property type="entry name" value="DNA_mismatch_S5_2-like"/>
</dbReference>
<dbReference type="InterPro" id="IPR036890">
    <property type="entry name" value="HATPase_C_sf"/>
</dbReference>
<dbReference type="InterPro" id="IPR002099">
    <property type="entry name" value="MutL/Mlh/PMS"/>
</dbReference>
<dbReference type="InterPro" id="IPR038973">
    <property type="entry name" value="MutL/Mlh/Pms-like"/>
</dbReference>
<dbReference type="InterPro" id="IPR014790">
    <property type="entry name" value="MutL_C"/>
</dbReference>
<dbReference type="InterPro" id="IPR042120">
    <property type="entry name" value="MutL_C_dimsub"/>
</dbReference>
<dbReference type="InterPro" id="IPR042121">
    <property type="entry name" value="MutL_C_regsub"/>
</dbReference>
<dbReference type="InterPro" id="IPR037198">
    <property type="entry name" value="MutL_C_sf"/>
</dbReference>
<dbReference type="InterPro" id="IPR020568">
    <property type="entry name" value="Ribosomal_Su5_D2-typ_SF"/>
</dbReference>
<dbReference type="InterPro" id="IPR014721">
    <property type="entry name" value="Ribsml_uS5_D2-typ_fold_subgr"/>
</dbReference>
<dbReference type="NCBIfam" id="TIGR00585">
    <property type="entry name" value="mutl"/>
    <property type="match status" value="1"/>
</dbReference>
<dbReference type="NCBIfam" id="NF000950">
    <property type="entry name" value="PRK00095.1-3"/>
    <property type="match status" value="1"/>
</dbReference>
<dbReference type="PANTHER" id="PTHR10073">
    <property type="entry name" value="DNA MISMATCH REPAIR PROTEIN MLH, PMS, MUTL"/>
    <property type="match status" value="1"/>
</dbReference>
<dbReference type="PANTHER" id="PTHR10073:SF12">
    <property type="entry name" value="DNA MISMATCH REPAIR PROTEIN MLH1"/>
    <property type="match status" value="1"/>
</dbReference>
<dbReference type="Pfam" id="PF01119">
    <property type="entry name" value="DNA_mis_repair"/>
    <property type="match status" value="1"/>
</dbReference>
<dbReference type="Pfam" id="PF13589">
    <property type="entry name" value="HATPase_c_3"/>
    <property type="match status" value="1"/>
</dbReference>
<dbReference type="Pfam" id="PF08676">
    <property type="entry name" value="MutL_C"/>
    <property type="match status" value="1"/>
</dbReference>
<dbReference type="SMART" id="SM01340">
    <property type="entry name" value="DNA_mis_repair"/>
    <property type="match status" value="1"/>
</dbReference>
<dbReference type="SMART" id="SM00853">
    <property type="entry name" value="MutL_C"/>
    <property type="match status" value="1"/>
</dbReference>
<dbReference type="SUPFAM" id="SSF55874">
    <property type="entry name" value="ATPase domain of HSP90 chaperone/DNA topoisomerase II/histidine kinase"/>
    <property type="match status" value="1"/>
</dbReference>
<dbReference type="SUPFAM" id="SSF118116">
    <property type="entry name" value="DNA mismatch repair protein MutL"/>
    <property type="match status" value="1"/>
</dbReference>
<dbReference type="SUPFAM" id="SSF54211">
    <property type="entry name" value="Ribosomal protein S5 domain 2-like"/>
    <property type="match status" value="1"/>
</dbReference>
<dbReference type="PROSITE" id="PS00058">
    <property type="entry name" value="DNA_MISMATCH_REPAIR_1"/>
    <property type="match status" value="1"/>
</dbReference>
<sequence length="646" mass="73744">MGNIKELQTSLANKIAAGEVVERPGSVVKELLENALDAKATEINIEIKQSGIESIRVVDNGTGIEEDDLKLVFHRHATSKLHEDSDLFHIRTLGFRGEALASISSVAKVTLRTCTDGQSGHEIYAEDGAILEQKPAKAKKGTDILVESLFYNTPARLKYVKSLYTELGKITDIVNRMAMSHPNVRFTLTSDDKVLIKTNGSGRTNEVMAEIYGMKVAKDLVHITGDTSDYHLEGYVAKPEHSRSNRHYISIFINGRYIKNFVLNKAIVEGYHTLLTIGRYPICYINIEMDPILVDVNVHPTKLEVRLSKEEQLYQLIVQKIQEAFKDKILIPHNDENKLYKKNKVLDVFEQQKLDFENRTASNPPAEKPDEETDRVNENSDTQAFQTNEQTSENGSDASYQAGQRAVLQDLEGNTKNSEGLFDSEATSNEAASAEIESSEDDVRETEHAKPHRRVPYMEVVGQVHGTYIIAQNETGMFMIDQHAAQERIKYEYFRDKIGEVTNEVQNLLIPMTFHFSKDEQMIINQYKDELDKVGVHLEPFGSHDYIVNSYPVWFPKEEAQEIIQDMVEYVLEHRKVDIKKIREEAAIMMSCKKSIKANHYLRNHEMADLIDQLREMEDPFTCPHGRPIIISFSNYELERLFKRIM</sequence>
<name>MUTL_STACT</name>
<feature type="chain" id="PRO_1000123215" description="DNA mismatch repair protein MutL">
    <location>
        <begin position="1"/>
        <end position="646"/>
    </location>
</feature>
<feature type="region of interest" description="Disordered" evidence="2">
    <location>
        <begin position="356"/>
        <end position="380"/>
    </location>
</feature>
<feature type="region of interest" description="Disordered" evidence="2">
    <location>
        <begin position="415"/>
        <end position="452"/>
    </location>
</feature>
<feature type="compositionally biased region" description="Low complexity" evidence="2">
    <location>
        <begin position="424"/>
        <end position="436"/>
    </location>
</feature>
<organism>
    <name type="scientific">Staphylococcus carnosus (strain TM300)</name>
    <dbReference type="NCBI Taxonomy" id="396513"/>
    <lineage>
        <taxon>Bacteria</taxon>
        <taxon>Bacillati</taxon>
        <taxon>Bacillota</taxon>
        <taxon>Bacilli</taxon>
        <taxon>Bacillales</taxon>
        <taxon>Staphylococcaceae</taxon>
        <taxon>Staphylococcus</taxon>
    </lineage>
</organism>
<gene>
    <name evidence="1" type="primary">mutL</name>
    <name type="ordered locus">Sca_0946</name>
</gene>
<protein>
    <recommendedName>
        <fullName evidence="1">DNA mismatch repair protein MutL</fullName>
    </recommendedName>
</protein>
<evidence type="ECO:0000255" key="1">
    <source>
        <dbReference type="HAMAP-Rule" id="MF_00149"/>
    </source>
</evidence>
<evidence type="ECO:0000256" key="2">
    <source>
        <dbReference type="SAM" id="MobiDB-lite"/>
    </source>
</evidence>
<accession>B9DPC0</accession>
<proteinExistence type="inferred from homology"/>
<keyword id="KW-0227">DNA damage</keyword>
<keyword id="KW-0234">DNA repair</keyword>
<keyword id="KW-1185">Reference proteome</keyword>
<reference key="1">
    <citation type="journal article" date="2009" name="Appl. Environ. Microbiol.">
        <title>Genome analysis of the meat starter culture bacterium Staphylococcus carnosus TM300.</title>
        <authorList>
            <person name="Rosenstein R."/>
            <person name="Nerz C."/>
            <person name="Biswas L."/>
            <person name="Resch A."/>
            <person name="Raddatz G."/>
            <person name="Schuster S.C."/>
            <person name="Goetz F."/>
        </authorList>
    </citation>
    <scope>NUCLEOTIDE SEQUENCE [LARGE SCALE GENOMIC DNA]</scope>
    <source>
        <strain>TM300</strain>
    </source>
</reference>
<comment type="function">
    <text evidence="1">This protein is involved in the repair of mismatches in DNA. It is required for dam-dependent methyl-directed DNA mismatch repair. May act as a 'molecular matchmaker', a protein that promotes the formation of a stable complex between two or more DNA-binding proteins in an ATP-dependent manner without itself being part of a final effector complex.</text>
</comment>
<comment type="similarity">
    <text evidence="1">Belongs to the DNA mismatch repair MutL/HexB family.</text>
</comment>